<protein>
    <recommendedName>
        <fullName evidence="1">3-isopropylmalate dehydratase large subunit</fullName>
        <ecNumber evidence="1">4.2.1.33</ecNumber>
    </recommendedName>
    <alternativeName>
        <fullName evidence="1">Alpha-IPM isomerase</fullName>
        <shortName evidence="1">IPMI</shortName>
    </alternativeName>
    <alternativeName>
        <fullName evidence="1">Isopropylmalate isomerase</fullName>
    </alternativeName>
</protein>
<comment type="function">
    <text evidence="1">Catalyzes the isomerization between 2-isopropylmalate and 3-isopropylmalate, via the formation of 2-isopropylmaleate.</text>
</comment>
<comment type="catalytic activity">
    <reaction evidence="1">
        <text>(2R,3S)-3-isopropylmalate = (2S)-2-isopropylmalate</text>
        <dbReference type="Rhea" id="RHEA:32287"/>
        <dbReference type="ChEBI" id="CHEBI:1178"/>
        <dbReference type="ChEBI" id="CHEBI:35121"/>
        <dbReference type="EC" id="4.2.1.33"/>
    </reaction>
</comment>
<comment type="cofactor">
    <cofactor evidence="1">
        <name>[4Fe-4S] cluster</name>
        <dbReference type="ChEBI" id="CHEBI:49883"/>
    </cofactor>
    <text evidence="1">Binds 1 [4Fe-4S] cluster per subunit.</text>
</comment>
<comment type="pathway">
    <text evidence="1">Amino-acid biosynthesis; L-leucine biosynthesis; L-leucine from 3-methyl-2-oxobutanoate: step 2/4.</text>
</comment>
<comment type="subunit">
    <text evidence="1">Heterodimer of LeuC and LeuD.</text>
</comment>
<comment type="similarity">
    <text evidence="1">Belongs to the aconitase/IPM isomerase family. LeuC type 1 subfamily.</text>
</comment>
<name>LEUC_SYNPW</name>
<feature type="chain" id="PRO_1000063624" description="3-isopropylmalate dehydratase large subunit">
    <location>
        <begin position="1"/>
        <end position="472"/>
    </location>
</feature>
<feature type="binding site" evidence="1">
    <location>
        <position position="347"/>
    </location>
    <ligand>
        <name>[4Fe-4S] cluster</name>
        <dbReference type="ChEBI" id="CHEBI:49883"/>
    </ligand>
</feature>
<feature type="binding site" evidence="1">
    <location>
        <position position="407"/>
    </location>
    <ligand>
        <name>[4Fe-4S] cluster</name>
        <dbReference type="ChEBI" id="CHEBI:49883"/>
    </ligand>
</feature>
<feature type="binding site" evidence="1">
    <location>
        <position position="410"/>
    </location>
    <ligand>
        <name>[4Fe-4S] cluster</name>
        <dbReference type="ChEBI" id="CHEBI:49883"/>
    </ligand>
</feature>
<keyword id="KW-0004">4Fe-4S</keyword>
<keyword id="KW-0028">Amino-acid biosynthesis</keyword>
<keyword id="KW-0100">Branched-chain amino acid biosynthesis</keyword>
<keyword id="KW-0408">Iron</keyword>
<keyword id="KW-0411">Iron-sulfur</keyword>
<keyword id="KW-0432">Leucine biosynthesis</keyword>
<keyword id="KW-0456">Lyase</keyword>
<keyword id="KW-0479">Metal-binding</keyword>
<keyword id="KW-1185">Reference proteome</keyword>
<reference key="1">
    <citation type="submission" date="2006-05" db="EMBL/GenBank/DDBJ databases">
        <authorList>
            <consortium name="Genoscope"/>
        </authorList>
    </citation>
    <scope>NUCLEOTIDE SEQUENCE [LARGE SCALE GENOMIC DNA]</scope>
    <source>
        <strain>WH7803</strain>
    </source>
</reference>
<proteinExistence type="inferred from homology"/>
<gene>
    <name evidence="1" type="primary">leuC</name>
    <name type="ordered locus">SynWH7803_0306</name>
</gene>
<accession>A5GIG7</accession>
<sequence>MSSGTLYDKVWDLHRVADLPGGSTQLFIGLHLIHEVTSPQAFAALEDKGLTVRCPQRTVATVDHIVPTTSQARPFADPLAEEMLSTLERNCSHHGITLHGLGSGRQGIVHVIAPELGLTQPGMTVACGDSHTSTHGAFGAIAFGIGTSQVRDVLASQSLAMNKLKVRRIWVENQLSPGVFAKDLILHVIRSLGVKAGVGYAYEFSGPAIEALSMEERMTLCNMAIEGGARCGYVNPDQTTFDYLHGRAQAPSAEAWDRAVSWWRSLASGADACFDDEVRFDAATIAPTVTWGITPGQGIGVDETVPRPEQLDPADRPIAEEAYRYMDLAPGQAIAGVPVDVCFIGSCTNGRLSDLQAAAAVAKGRHVASGIRAFVVPGSEQVARAAEAEGLDAVFREAGFEWREPGCSMCLAMNPDRLEGRQISASSSNRNFKGRQGSASGRTLLMSPAMVAAAAITGQVRDVRQLNCMTTD</sequence>
<organism>
    <name type="scientific">Synechococcus sp. (strain WH7803)</name>
    <dbReference type="NCBI Taxonomy" id="32051"/>
    <lineage>
        <taxon>Bacteria</taxon>
        <taxon>Bacillati</taxon>
        <taxon>Cyanobacteriota</taxon>
        <taxon>Cyanophyceae</taxon>
        <taxon>Synechococcales</taxon>
        <taxon>Synechococcaceae</taxon>
        <taxon>Synechococcus</taxon>
    </lineage>
</organism>
<dbReference type="EC" id="4.2.1.33" evidence="1"/>
<dbReference type="EMBL" id="CT971583">
    <property type="protein sequence ID" value="CAK22732.1"/>
    <property type="molecule type" value="Genomic_DNA"/>
</dbReference>
<dbReference type="SMR" id="A5GIG7"/>
<dbReference type="STRING" id="32051.SynWH7803_0306"/>
<dbReference type="KEGG" id="syx:SynWH7803_0306"/>
<dbReference type="eggNOG" id="COG0065">
    <property type="taxonomic scope" value="Bacteria"/>
</dbReference>
<dbReference type="HOGENOM" id="CLU_006714_3_4_3"/>
<dbReference type="OrthoDB" id="9802769at2"/>
<dbReference type="UniPathway" id="UPA00048">
    <property type="reaction ID" value="UER00071"/>
</dbReference>
<dbReference type="Proteomes" id="UP000001566">
    <property type="component" value="Chromosome"/>
</dbReference>
<dbReference type="GO" id="GO:0003861">
    <property type="term" value="F:3-isopropylmalate dehydratase activity"/>
    <property type="evidence" value="ECO:0007669"/>
    <property type="project" value="UniProtKB-UniRule"/>
</dbReference>
<dbReference type="GO" id="GO:0051539">
    <property type="term" value="F:4 iron, 4 sulfur cluster binding"/>
    <property type="evidence" value="ECO:0007669"/>
    <property type="project" value="UniProtKB-KW"/>
</dbReference>
<dbReference type="GO" id="GO:0046872">
    <property type="term" value="F:metal ion binding"/>
    <property type="evidence" value="ECO:0007669"/>
    <property type="project" value="UniProtKB-KW"/>
</dbReference>
<dbReference type="GO" id="GO:0009098">
    <property type="term" value="P:L-leucine biosynthetic process"/>
    <property type="evidence" value="ECO:0007669"/>
    <property type="project" value="UniProtKB-UniRule"/>
</dbReference>
<dbReference type="CDD" id="cd01583">
    <property type="entry name" value="IPMI"/>
    <property type="match status" value="1"/>
</dbReference>
<dbReference type="Gene3D" id="3.30.499.10">
    <property type="entry name" value="Aconitase, domain 3"/>
    <property type="match status" value="2"/>
</dbReference>
<dbReference type="HAMAP" id="MF_01026">
    <property type="entry name" value="LeuC_type1"/>
    <property type="match status" value="1"/>
</dbReference>
<dbReference type="InterPro" id="IPR004430">
    <property type="entry name" value="3-IsopropMal_deHydase_lsu"/>
</dbReference>
<dbReference type="InterPro" id="IPR015931">
    <property type="entry name" value="Acnase/IPM_dHydase_lsu_aba_1/3"/>
</dbReference>
<dbReference type="InterPro" id="IPR001030">
    <property type="entry name" value="Acoase/IPM_deHydtase_lsu_aba"/>
</dbReference>
<dbReference type="InterPro" id="IPR018136">
    <property type="entry name" value="Aconitase_4Fe-4S_BS"/>
</dbReference>
<dbReference type="InterPro" id="IPR036008">
    <property type="entry name" value="Aconitase_4Fe-4S_dom"/>
</dbReference>
<dbReference type="InterPro" id="IPR050067">
    <property type="entry name" value="IPM_dehydratase_rel_enz"/>
</dbReference>
<dbReference type="InterPro" id="IPR033941">
    <property type="entry name" value="IPMI_cat"/>
</dbReference>
<dbReference type="NCBIfam" id="TIGR00170">
    <property type="entry name" value="leuC"/>
    <property type="match status" value="1"/>
</dbReference>
<dbReference type="NCBIfam" id="NF004016">
    <property type="entry name" value="PRK05478.1"/>
    <property type="match status" value="1"/>
</dbReference>
<dbReference type="NCBIfam" id="NF009116">
    <property type="entry name" value="PRK12466.1"/>
    <property type="match status" value="1"/>
</dbReference>
<dbReference type="PANTHER" id="PTHR43822:SF9">
    <property type="entry name" value="3-ISOPROPYLMALATE DEHYDRATASE"/>
    <property type="match status" value="1"/>
</dbReference>
<dbReference type="PANTHER" id="PTHR43822">
    <property type="entry name" value="HOMOACONITASE, MITOCHONDRIAL-RELATED"/>
    <property type="match status" value="1"/>
</dbReference>
<dbReference type="Pfam" id="PF00330">
    <property type="entry name" value="Aconitase"/>
    <property type="match status" value="1"/>
</dbReference>
<dbReference type="PRINTS" id="PR00415">
    <property type="entry name" value="ACONITASE"/>
</dbReference>
<dbReference type="SUPFAM" id="SSF53732">
    <property type="entry name" value="Aconitase iron-sulfur domain"/>
    <property type="match status" value="1"/>
</dbReference>
<dbReference type="PROSITE" id="PS00450">
    <property type="entry name" value="ACONITASE_1"/>
    <property type="match status" value="1"/>
</dbReference>
<dbReference type="PROSITE" id="PS01244">
    <property type="entry name" value="ACONITASE_2"/>
    <property type="match status" value="1"/>
</dbReference>
<evidence type="ECO:0000255" key="1">
    <source>
        <dbReference type="HAMAP-Rule" id="MF_01026"/>
    </source>
</evidence>